<protein>
    <recommendedName>
        <fullName>Major facilitator superfamily domain-containing protein 6-like</fullName>
    </recommendedName>
</protein>
<keyword id="KW-0472">Membrane</keyword>
<keyword id="KW-1185">Reference proteome</keyword>
<keyword id="KW-0812">Transmembrane</keyword>
<keyword id="KW-1133">Transmembrane helix</keyword>
<feature type="chain" id="PRO_0000321945" description="Major facilitator superfamily domain-containing protein 6-like">
    <location>
        <begin position="1"/>
        <end position="586"/>
    </location>
</feature>
<feature type="transmembrane region" description="Helical" evidence="1">
    <location>
        <begin position="50"/>
        <end position="70"/>
    </location>
</feature>
<feature type="transmembrane region" description="Helical" evidence="1">
    <location>
        <begin position="78"/>
        <end position="98"/>
    </location>
</feature>
<feature type="transmembrane region" description="Helical" evidence="1">
    <location>
        <begin position="240"/>
        <end position="260"/>
    </location>
</feature>
<feature type="transmembrane region" description="Helical" evidence="1">
    <location>
        <begin position="284"/>
        <end position="304"/>
    </location>
</feature>
<feature type="transmembrane region" description="Helical" evidence="1">
    <location>
        <begin position="318"/>
        <end position="338"/>
    </location>
</feature>
<feature type="transmembrane region" description="Helical" evidence="1">
    <location>
        <begin position="365"/>
        <end position="385"/>
    </location>
</feature>
<feature type="transmembrane region" description="Helical" evidence="1">
    <location>
        <begin position="397"/>
        <end position="417"/>
    </location>
</feature>
<feature type="transmembrane region" description="Helical" evidence="1">
    <location>
        <begin position="428"/>
        <end position="448"/>
    </location>
</feature>
<feature type="transmembrane region" description="Helical" evidence="1">
    <location>
        <begin position="454"/>
        <end position="474"/>
    </location>
</feature>
<feature type="transmembrane region" description="Helical" evidence="1">
    <location>
        <begin position="494"/>
        <end position="514"/>
    </location>
</feature>
<feature type="transmembrane region" description="Helical" evidence="1">
    <location>
        <begin position="519"/>
        <end position="538"/>
    </location>
</feature>
<feature type="region of interest" description="Disordered" evidence="2">
    <location>
        <begin position="218"/>
        <end position="237"/>
    </location>
</feature>
<feature type="compositionally biased region" description="Polar residues" evidence="2">
    <location>
        <begin position="223"/>
        <end position="237"/>
    </location>
</feature>
<sequence length="586" mass="63430">MSPNPQWDVPRALRVARLFHLVCGVRDACVTPFLTLYLRQLGVAAPLVGILMGTKHLIATCWIPFCAFLAKRYQKRRMFLTGSLLSSAGASLLMVLVPPVDRNLVNHFCNGSSRVATTILPLGVTQTVIMTPTQGSGAPNLPGSRHTRALDTSGFPNGSEGTFSGLQTYLVGSVEGARTTTQGLHLVTSGLRDNSQKGTFEVGNVTLNLLPGSTALGGPVNLSKPQGDTQTPDHSSKGSPWTFILSLGVVVFWELLAAPLEQVADDSLYEYLDFVDATDRNRDLWVWKLLGVSAGVCGIAALVGHLECLLVANGPQGVIYFYSYSLVSTLALAVSTAFPVPIDQQQGPSYKAIKALSLIRGDSRLILLAFTVFWIGATASTVQDFLFWHMKDHGSSELVMGFSVALSLLGEILFHPFRTSLLRKLSRVGVLGLGLGCLALQVLYYAFIWSWWSVLPVQILSTISSGALWWAVGASIEDLAFSGMERSLGTMFRGHFYGSGCSLGSFVGGFVVLHFGIAVLYEACCVVLLLWLALFLSIQPRLPQEQRINYSKLLAMGGSDSSDSEQGSEGDWLVKAMREEHSDWKG</sequence>
<name>MFS6L_MOUSE</name>
<comment type="subcellular location">
    <subcellularLocation>
        <location evidence="3">Membrane</location>
        <topology evidence="3">Multi-pass membrane protein</topology>
    </subcellularLocation>
</comment>
<comment type="similarity">
    <text evidence="3">Belongs to the major facilitator superfamily. MFSD6 family.</text>
</comment>
<proteinExistence type="evidence at protein level"/>
<organism>
    <name type="scientific">Mus musculus</name>
    <name type="common">Mouse</name>
    <dbReference type="NCBI Taxonomy" id="10090"/>
    <lineage>
        <taxon>Eukaryota</taxon>
        <taxon>Metazoa</taxon>
        <taxon>Chordata</taxon>
        <taxon>Craniata</taxon>
        <taxon>Vertebrata</taxon>
        <taxon>Euteleostomi</taxon>
        <taxon>Mammalia</taxon>
        <taxon>Eutheria</taxon>
        <taxon>Euarchontoglires</taxon>
        <taxon>Glires</taxon>
        <taxon>Rodentia</taxon>
        <taxon>Myomorpha</taxon>
        <taxon>Muroidea</taxon>
        <taxon>Muridae</taxon>
        <taxon>Murinae</taxon>
        <taxon>Mus</taxon>
        <taxon>Mus</taxon>
    </lineage>
</organism>
<accession>Q8R3N2</accession>
<dbReference type="EMBL" id="BC024997">
    <property type="protein sequence ID" value="AAH24997.1"/>
    <property type="molecule type" value="mRNA"/>
</dbReference>
<dbReference type="CCDS" id="CCDS24867.1"/>
<dbReference type="RefSeq" id="NP_666116.1">
    <property type="nucleotide sequence ID" value="NM_146004.1"/>
</dbReference>
<dbReference type="FunCoup" id="Q8R3N2">
    <property type="interactions" value="726"/>
</dbReference>
<dbReference type="STRING" id="10090.ENSMUSP00000061601"/>
<dbReference type="iPTMnet" id="Q8R3N2"/>
<dbReference type="PhosphoSitePlus" id="Q8R3N2"/>
<dbReference type="PaxDb" id="10090-ENSMUSP00000061601"/>
<dbReference type="ProteomicsDB" id="292314"/>
<dbReference type="Antibodypedia" id="12633">
    <property type="antibodies" value="14 antibodies from 9 providers"/>
</dbReference>
<dbReference type="DNASU" id="215723"/>
<dbReference type="Ensembl" id="ENSMUST00000053211.8">
    <property type="protein sequence ID" value="ENSMUSP00000061601.7"/>
    <property type="gene ID" value="ENSMUSG00000048329.8"/>
</dbReference>
<dbReference type="GeneID" id="215723"/>
<dbReference type="KEGG" id="mmu:215723"/>
<dbReference type="UCSC" id="uc007jnv.1">
    <property type="organism name" value="mouse"/>
</dbReference>
<dbReference type="AGR" id="MGI:2384904"/>
<dbReference type="CTD" id="162387"/>
<dbReference type="MGI" id="MGI:2384904">
    <property type="gene designation" value="Mfsd6l"/>
</dbReference>
<dbReference type="VEuPathDB" id="HostDB:ENSMUSG00000048329"/>
<dbReference type="eggNOG" id="KOG3762">
    <property type="taxonomic scope" value="Eukaryota"/>
</dbReference>
<dbReference type="GeneTree" id="ENSGT00530000063599"/>
<dbReference type="HOGENOM" id="CLU_013133_4_0_1"/>
<dbReference type="InParanoid" id="Q8R3N2"/>
<dbReference type="OMA" id="EGLQWTF"/>
<dbReference type="OrthoDB" id="515887at2759"/>
<dbReference type="PhylomeDB" id="Q8R3N2"/>
<dbReference type="TreeFam" id="TF314366"/>
<dbReference type="BioGRID-ORCS" id="215723">
    <property type="hits" value="1 hit in 76 CRISPR screens"/>
</dbReference>
<dbReference type="ChiTaRS" id="Mfsd6l">
    <property type="organism name" value="mouse"/>
</dbReference>
<dbReference type="PRO" id="PR:Q8R3N2"/>
<dbReference type="Proteomes" id="UP000000589">
    <property type="component" value="Chromosome 11"/>
</dbReference>
<dbReference type="RNAct" id="Q8R3N2">
    <property type="molecule type" value="protein"/>
</dbReference>
<dbReference type="Bgee" id="ENSMUSG00000048329">
    <property type="expression patterns" value="Expressed in spermatocyte and 36 other cell types or tissues"/>
</dbReference>
<dbReference type="GO" id="GO:0016020">
    <property type="term" value="C:membrane"/>
    <property type="evidence" value="ECO:0007669"/>
    <property type="project" value="UniProtKB-SubCell"/>
</dbReference>
<dbReference type="CDD" id="cd17479">
    <property type="entry name" value="MFS_MFSD6L"/>
    <property type="match status" value="1"/>
</dbReference>
<dbReference type="Gene3D" id="1.20.1250.20">
    <property type="entry name" value="MFS general substrate transporter like domains"/>
    <property type="match status" value="2"/>
</dbReference>
<dbReference type="InterPro" id="IPR024989">
    <property type="entry name" value="MFS_assoc_dom"/>
</dbReference>
<dbReference type="InterPro" id="IPR051717">
    <property type="entry name" value="MFS_MFSD6"/>
</dbReference>
<dbReference type="InterPro" id="IPR036259">
    <property type="entry name" value="MFS_trans_sf"/>
</dbReference>
<dbReference type="PANTHER" id="PTHR16172">
    <property type="entry name" value="MAJOR FACILITATOR SUPERFAMILY DOMAIN-CONTAINING PROTEIN 6-LIKE"/>
    <property type="match status" value="1"/>
</dbReference>
<dbReference type="PANTHER" id="PTHR16172:SF41">
    <property type="entry name" value="MAJOR FACILITATOR SUPERFAMILY DOMAIN-CONTAINING PROTEIN 6-LIKE"/>
    <property type="match status" value="1"/>
</dbReference>
<dbReference type="Pfam" id="PF12832">
    <property type="entry name" value="MFS_1_like"/>
    <property type="match status" value="1"/>
</dbReference>
<dbReference type="SUPFAM" id="SSF103473">
    <property type="entry name" value="MFS general substrate transporter"/>
    <property type="match status" value="2"/>
</dbReference>
<evidence type="ECO:0000255" key="1"/>
<evidence type="ECO:0000256" key="2">
    <source>
        <dbReference type="SAM" id="MobiDB-lite"/>
    </source>
</evidence>
<evidence type="ECO:0000305" key="3"/>
<reference key="1">
    <citation type="journal article" date="2004" name="Genome Res.">
        <title>The status, quality, and expansion of the NIH full-length cDNA project: the Mammalian Gene Collection (MGC).</title>
        <authorList>
            <consortium name="The MGC Project Team"/>
        </authorList>
    </citation>
    <scope>NUCLEOTIDE SEQUENCE [LARGE SCALE MRNA]</scope>
    <source>
        <strain>FVB/N-3</strain>
        <tissue>Mammary tumor</tissue>
    </source>
</reference>
<reference key="2">
    <citation type="journal article" date="2014" name="Mol. Cell. Proteomics">
        <title>Immunoaffinity enrichment and mass spectrometry analysis of protein methylation.</title>
        <authorList>
            <person name="Guo A."/>
            <person name="Gu H."/>
            <person name="Zhou J."/>
            <person name="Mulhern D."/>
            <person name="Wang Y."/>
            <person name="Lee K.A."/>
            <person name="Yang V."/>
            <person name="Aguiar M."/>
            <person name="Kornhauser J."/>
            <person name="Jia X."/>
            <person name="Ren J."/>
            <person name="Beausoleil S.A."/>
            <person name="Silva J.C."/>
            <person name="Vemulapalli V."/>
            <person name="Bedford M.T."/>
            <person name="Comb M.J."/>
        </authorList>
    </citation>
    <scope>IDENTIFICATION BY MASS SPECTROMETRY [LARGE SCALE ANALYSIS]</scope>
    <source>
        <tissue>Brain</tissue>
    </source>
</reference>
<gene>
    <name type="primary">Mfsd6l</name>
</gene>